<protein>
    <recommendedName>
        <fullName evidence="1">Orotate phosphoribosyltransferase</fullName>
        <shortName evidence="1">OPRT</shortName>
        <shortName evidence="1">OPRTase</shortName>
        <ecNumber evidence="1">2.4.2.10</ecNumber>
    </recommendedName>
</protein>
<evidence type="ECO:0000255" key="1">
    <source>
        <dbReference type="HAMAP-Rule" id="MF_01208"/>
    </source>
</evidence>
<keyword id="KW-0328">Glycosyltransferase</keyword>
<keyword id="KW-0460">Magnesium</keyword>
<keyword id="KW-0665">Pyrimidine biosynthesis</keyword>
<keyword id="KW-0808">Transferase</keyword>
<sequence length="209" mass="22771">MTLASQIATQLLDIKAVYLKPEDPFTWASGIKSPIYTDNRVTLSYPKTRDLIENGFVETIRAHFPEVEVIAGTATAGIPHGAIIADKMTLPFAYIRSKPKDHGAGNQIEGRVLKGQKMVIIEDLISTGGSVLDAAAAASREGADVLGVVAIFTYELPKASQNFKEAGIKLITLSNYTELIAVAKLQGYITNDGLHLLKKFKEDQVNWQQ</sequence>
<feature type="chain" id="PRO_0000411474" description="Orotate phosphoribosyltransferase">
    <location>
        <begin position="1"/>
        <end position="209"/>
    </location>
</feature>
<feature type="binding site" evidence="1">
    <location>
        <position position="96"/>
    </location>
    <ligand>
        <name>5-phospho-alpha-D-ribose 1-diphosphate</name>
        <dbReference type="ChEBI" id="CHEBI:58017"/>
        <note>ligand shared between dimeric partners</note>
    </ligand>
</feature>
<feature type="binding site" evidence="1">
    <location>
        <position position="100"/>
    </location>
    <ligand>
        <name>5-phospho-alpha-D-ribose 1-diphosphate</name>
        <dbReference type="ChEBI" id="CHEBI:58017"/>
        <note>ligand shared between dimeric partners</note>
    </ligand>
</feature>
<feature type="binding site" evidence="1">
    <location>
        <position position="102"/>
    </location>
    <ligand>
        <name>5-phospho-alpha-D-ribose 1-diphosphate</name>
        <dbReference type="ChEBI" id="CHEBI:58017"/>
        <note>ligand shared between dimeric partners</note>
    </ligand>
</feature>
<feature type="binding site" description="in other chain" evidence="1">
    <location>
        <begin position="122"/>
        <end position="130"/>
    </location>
    <ligand>
        <name>5-phospho-alpha-D-ribose 1-diphosphate</name>
        <dbReference type="ChEBI" id="CHEBI:58017"/>
        <note>ligand shared between dimeric partners</note>
    </ligand>
</feature>
<feature type="binding site" evidence="1">
    <location>
        <position position="126"/>
    </location>
    <ligand>
        <name>orotate</name>
        <dbReference type="ChEBI" id="CHEBI:30839"/>
    </ligand>
</feature>
<reference key="1">
    <citation type="journal article" date="2003" name="Genome Res.">
        <title>Genome sequence of an M3 strain of Streptococcus pyogenes reveals a large-scale genomic rearrangement in invasive strains and new insights into phage evolution.</title>
        <authorList>
            <person name="Nakagawa I."/>
            <person name="Kurokawa K."/>
            <person name="Yamashita A."/>
            <person name="Nakata M."/>
            <person name="Tomiyasu Y."/>
            <person name="Okahashi N."/>
            <person name="Kawabata S."/>
            <person name="Yamazaki K."/>
            <person name="Shiba T."/>
            <person name="Yasunaga T."/>
            <person name="Hayashi H."/>
            <person name="Hattori M."/>
            <person name="Hamada S."/>
        </authorList>
    </citation>
    <scope>NUCLEOTIDE SEQUENCE [LARGE SCALE GENOMIC DNA]</scope>
    <source>
        <strain>SSI-1</strain>
    </source>
</reference>
<proteinExistence type="inferred from homology"/>
<dbReference type="EC" id="2.4.2.10" evidence="1"/>
<dbReference type="EMBL" id="BA000034">
    <property type="protein sequence ID" value="BAC64331.1"/>
    <property type="molecule type" value="Genomic_DNA"/>
</dbReference>
<dbReference type="RefSeq" id="WP_002984920.1">
    <property type="nucleotide sequence ID" value="NC_004606.1"/>
</dbReference>
<dbReference type="SMR" id="P0DD69"/>
<dbReference type="GeneID" id="69900997"/>
<dbReference type="KEGG" id="sps:SPs1236"/>
<dbReference type="HOGENOM" id="CLU_074878_1_1_9"/>
<dbReference type="UniPathway" id="UPA00070">
    <property type="reaction ID" value="UER00119"/>
</dbReference>
<dbReference type="GO" id="GO:0000287">
    <property type="term" value="F:magnesium ion binding"/>
    <property type="evidence" value="ECO:0007669"/>
    <property type="project" value="UniProtKB-UniRule"/>
</dbReference>
<dbReference type="GO" id="GO:0004588">
    <property type="term" value="F:orotate phosphoribosyltransferase activity"/>
    <property type="evidence" value="ECO:0007669"/>
    <property type="project" value="UniProtKB-UniRule"/>
</dbReference>
<dbReference type="GO" id="GO:0044205">
    <property type="term" value="P:'de novo' UMP biosynthetic process"/>
    <property type="evidence" value="ECO:0007669"/>
    <property type="project" value="UniProtKB-UniRule"/>
</dbReference>
<dbReference type="GO" id="GO:0019856">
    <property type="term" value="P:pyrimidine nucleobase biosynthetic process"/>
    <property type="evidence" value="ECO:0007669"/>
    <property type="project" value="TreeGrafter"/>
</dbReference>
<dbReference type="CDD" id="cd06223">
    <property type="entry name" value="PRTases_typeI"/>
    <property type="match status" value="1"/>
</dbReference>
<dbReference type="Gene3D" id="3.40.50.2020">
    <property type="match status" value="1"/>
</dbReference>
<dbReference type="HAMAP" id="MF_01208">
    <property type="entry name" value="PyrE"/>
    <property type="match status" value="1"/>
</dbReference>
<dbReference type="InterPro" id="IPR023031">
    <property type="entry name" value="OPRT"/>
</dbReference>
<dbReference type="InterPro" id="IPR004467">
    <property type="entry name" value="Or_phspho_trans_dom"/>
</dbReference>
<dbReference type="InterPro" id="IPR000836">
    <property type="entry name" value="PRibTrfase_dom"/>
</dbReference>
<dbReference type="InterPro" id="IPR029057">
    <property type="entry name" value="PRTase-like"/>
</dbReference>
<dbReference type="NCBIfam" id="TIGR00336">
    <property type="entry name" value="pyrE"/>
    <property type="match status" value="1"/>
</dbReference>
<dbReference type="PANTHER" id="PTHR19278">
    <property type="entry name" value="OROTATE PHOSPHORIBOSYLTRANSFERASE"/>
    <property type="match status" value="1"/>
</dbReference>
<dbReference type="PANTHER" id="PTHR19278:SF9">
    <property type="entry name" value="URIDINE 5'-MONOPHOSPHATE SYNTHASE"/>
    <property type="match status" value="1"/>
</dbReference>
<dbReference type="Pfam" id="PF00156">
    <property type="entry name" value="Pribosyltran"/>
    <property type="match status" value="1"/>
</dbReference>
<dbReference type="SUPFAM" id="SSF53271">
    <property type="entry name" value="PRTase-like"/>
    <property type="match status" value="1"/>
</dbReference>
<dbReference type="PROSITE" id="PS00103">
    <property type="entry name" value="PUR_PYR_PR_TRANSFER"/>
    <property type="match status" value="1"/>
</dbReference>
<comment type="function">
    <text evidence="1">Catalyzes the transfer of a ribosyl phosphate group from 5-phosphoribose 1-diphosphate to orotate, leading to the formation of orotidine monophosphate (OMP).</text>
</comment>
<comment type="catalytic activity">
    <reaction evidence="1">
        <text>orotidine 5'-phosphate + diphosphate = orotate + 5-phospho-alpha-D-ribose 1-diphosphate</text>
        <dbReference type="Rhea" id="RHEA:10380"/>
        <dbReference type="ChEBI" id="CHEBI:30839"/>
        <dbReference type="ChEBI" id="CHEBI:33019"/>
        <dbReference type="ChEBI" id="CHEBI:57538"/>
        <dbReference type="ChEBI" id="CHEBI:58017"/>
        <dbReference type="EC" id="2.4.2.10"/>
    </reaction>
</comment>
<comment type="cofactor">
    <cofactor evidence="1">
        <name>Mg(2+)</name>
        <dbReference type="ChEBI" id="CHEBI:18420"/>
    </cofactor>
</comment>
<comment type="pathway">
    <text evidence="1">Pyrimidine metabolism; UMP biosynthesis via de novo pathway; UMP from orotate: step 1/2.</text>
</comment>
<comment type="subunit">
    <text evidence="1">Homodimer.</text>
</comment>
<comment type="similarity">
    <text evidence="1">Belongs to the purine/pyrimidine phosphoribosyltransferase family. PyrE subfamily.</text>
</comment>
<name>PYRE_STRPQ</name>
<gene>
    <name evidence="1" type="primary">pyrE</name>
    <name type="ordered locus">SPs1236</name>
</gene>
<organism>
    <name type="scientific">Streptococcus pyogenes serotype M3 (strain SSI-1)</name>
    <dbReference type="NCBI Taxonomy" id="193567"/>
    <lineage>
        <taxon>Bacteria</taxon>
        <taxon>Bacillati</taxon>
        <taxon>Bacillota</taxon>
        <taxon>Bacilli</taxon>
        <taxon>Lactobacillales</taxon>
        <taxon>Streptococcaceae</taxon>
        <taxon>Streptococcus</taxon>
    </lineage>
</organism>
<accession>P0DD69</accession>
<accession>P58857</accession>
<accession>P65919</accession>